<proteinExistence type="inferred from homology"/>
<sequence length="120" mass="13388">MIVGHGIDIEELASIESAVTRHEGFAKRVLTAQEMERFTSLKGRRQIEYLAGRWSAKEAFSKAMGTGISKLGFQDLEVLNNERGAPYFSQAPFSGKIWLSISHTDQFVTASVILEENHES</sequence>
<gene>
    <name evidence="1" type="primary">acpS</name>
    <name type="ordered locus">SPJ_1592</name>
</gene>
<evidence type="ECO:0000255" key="1">
    <source>
        <dbReference type="HAMAP-Rule" id="MF_00101"/>
    </source>
</evidence>
<name>ACPS_STRZJ</name>
<keyword id="KW-0963">Cytoplasm</keyword>
<keyword id="KW-0275">Fatty acid biosynthesis</keyword>
<keyword id="KW-0276">Fatty acid metabolism</keyword>
<keyword id="KW-0444">Lipid biosynthesis</keyword>
<keyword id="KW-0443">Lipid metabolism</keyword>
<keyword id="KW-0460">Magnesium</keyword>
<keyword id="KW-0479">Metal-binding</keyword>
<keyword id="KW-0808">Transferase</keyword>
<dbReference type="EC" id="2.7.8.7" evidence="1"/>
<dbReference type="EMBL" id="CP000919">
    <property type="protein sequence ID" value="ACO19355.1"/>
    <property type="molecule type" value="Genomic_DNA"/>
</dbReference>
<dbReference type="RefSeq" id="WP_000635008.1">
    <property type="nucleotide sequence ID" value="NC_012466.1"/>
</dbReference>
<dbReference type="SMR" id="C1CFR8"/>
<dbReference type="KEGG" id="sjj:SPJ_1592"/>
<dbReference type="HOGENOM" id="CLU_089696_1_2_9"/>
<dbReference type="Proteomes" id="UP000002206">
    <property type="component" value="Chromosome"/>
</dbReference>
<dbReference type="GO" id="GO:0005829">
    <property type="term" value="C:cytosol"/>
    <property type="evidence" value="ECO:0007669"/>
    <property type="project" value="TreeGrafter"/>
</dbReference>
<dbReference type="GO" id="GO:0008897">
    <property type="term" value="F:holo-[acyl-carrier-protein] synthase activity"/>
    <property type="evidence" value="ECO:0007669"/>
    <property type="project" value="UniProtKB-UniRule"/>
</dbReference>
<dbReference type="GO" id="GO:0000287">
    <property type="term" value="F:magnesium ion binding"/>
    <property type="evidence" value="ECO:0007669"/>
    <property type="project" value="UniProtKB-UniRule"/>
</dbReference>
<dbReference type="GO" id="GO:0006633">
    <property type="term" value="P:fatty acid biosynthetic process"/>
    <property type="evidence" value="ECO:0007669"/>
    <property type="project" value="UniProtKB-UniRule"/>
</dbReference>
<dbReference type="GO" id="GO:0019878">
    <property type="term" value="P:lysine biosynthetic process via aminoadipic acid"/>
    <property type="evidence" value="ECO:0007669"/>
    <property type="project" value="TreeGrafter"/>
</dbReference>
<dbReference type="Gene3D" id="3.90.470.20">
    <property type="entry name" value="4'-phosphopantetheinyl transferase domain"/>
    <property type="match status" value="1"/>
</dbReference>
<dbReference type="HAMAP" id="MF_00101">
    <property type="entry name" value="AcpS"/>
    <property type="match status" value="1"/>
</dbReference>
<dbReference type="InterPro" id="IPR008278">
    <property type="entry name" value="4-PPantetheinyl_Trfase_dom"/>
</dbReference>
<dbReference type="InterPro" id="IPR037143">
    <property type="entry name" value="4-PPantetheinyl_Trfase_dom_sf"/>
</dbReference>
<dbReference type="InterPro" id="IPR002582">
    <property type="entry name" value="ACPS"/>
</dbReference>
<dbReference type="InterPro" id="IPR050559">
    <property type="entry name" value="P-Pant_transferase_sf"/>
</dbReference>
<dbReference type="InterPro" id="IPR004568">
    <property type="entry name" value="Ppantetheine-prot_Trfase_dom"/>
</dbReference>
<dbReference type="NCBIfam" id="TIGR00516">
    <property type="entry name" value="acpS"/>
    <property type="match status" value="1"/>
</dbReference>
<dbReference type="NCBIfam" id="TIGR00556">
    <property type="entry name" value="pantethn_trn"/>
    <property type="match status" value="1"/>
</dbReference>
<dbReference type="PANTHER" id="PTHR12215:SF10">
    <property type="entry name" value="L-AMINOADIPATE-SEMIALDEHYDE DEHYDROGENASE-PHOSPHOPANTETHEINYL TRANSFERASE"/>
    <property type="match status" value="1"/>
</dbReference>
<dbReference type="PANTHER" id="PTHR12215">
    <property type="entry name" value="PHOSPHOPANTETHEINE TRANSFERASE"/>
    <property type="match status" value="1"/>
</dbReference>
<dbReference type="Pfam" id="PF01648">
    <property type="entry name" value="ACPS"/>
    <property type="match status" value="1"/>
</dbReference>
<dbReference type="SUPFAM" id="SSF56214">
    <property type="entry name" value="4'-phosphopantetheinyl transferase"/>
    <property type="match status" value="1"/>
</dbReference>
<accession>C1CFR8</accession>
<reference key="1">
    <citation type="journal article" date="2010" name="Genome Biol.">
        <title>Structure and dynamics of the pan-genome of Streptococcus pneumoniae and closely related species.</title>
        <authorList>
            <person name="Donati C."/>
            <person name="Hiller N.L."/>
            <person name="Tettelin H."/>
            <person name="Muzzi A."/>
            <person name="Croucher N.J."/>
            <person name="Angiuoli S.V."/>
            <person name="Oggioni M."/>
            <person name="Dunning Hotopp J.C."/>
            <person name="Hu F.Z."/>
            <person name="Riley D.R."/>
            <person name="Covacci A."/>
            <person name="Mitchell T.J."/>
            <person name="Bentley S.D."/>
            <person name="Kilian M."/>
            <person name="Ehrlich G.D."/>
            <person name="Rappuoli R."/>
            <person name="Moxon E.R."/>
            <person name="Masignani V."/>
        </authorList>
    </citation>
    <scope>NUCLEOTIDE SEQUENCE [LARGE SCALE GENOMIC DNA]</scope>
    <source>
        <strain>JJA</strain>
    </source>
</reference>
<protein>
    <recommendedName>
        <fullName evidence="1">Holo-[acyl-carrier-protein] synthase</fullName>
        <shortName evidence="1">Holo-ACP synthase</shortName>
        <ecNumber evidence="1">2.7.8.7</ecNumber>
    </recommendedName>
    <alternativeName>
        <fullName evidence="1">4'-phosphopantetheinyl transferase AcpS</fullName>
    </alternativeName>
</protein>
<comment type="function">
    <text evidence="1">Transfers the 4'-phosphopantetheine moiety from coenzyme A to a Ser of acyl-carrier-protein.</text>
</comment>
<comment type="catalytic activity">
    <reaction evidence="1">
        <text>apo-[ACP] + CoA = holo-[ACP] + adenosine 3',5'-bisphosphate + H(+)</text>
        <dbReference type="Rhea" id="RHEA:12068"/>
        <dbReference type="Rhea" id="RHEA-COMP:9685"/>
        <dbReference type="Rhea" id="RHEA-COMP:9690"/>
        <dbReference type="ChEBI" id="CHEBI:15378"/>
        <dbReference type="ChEBI" id="CHEBI:29999"/>
        <dbReference type="ChEBI" id="CHEBI:57287"/>
        <dbReference type="ChEBI" id="CHEBI:58343"/>
        <dbReference type="ChEBI" id="CHEBI:64479"/>
        <dbReference type="EC" id="2.7.8.7"/>
    </reaction>
</comment>
<comment type="cofactor">
    <cofactor evidence="1">
        <name>Mg(2+)</name>
        <dbReference type="ChEBI" id="CHEBI:18420"/>
    </cofactor>
</comment>
<comment type="subcellular location">
    <subcellularLocation>
        <location evidence="1">Cytoplasm</location>
    </subcellularLocation>
</comment>
<comment type="similarity">
    <text evidence="1">Belongs to the P-Pant transferase superfamily. AcpS family.</text>
</comment>
<feature type="chain" id="PRO_1000118830" description="Holo-[acyl-carrier-protein] synthase">
    <location>
        <begin position="1"/>
        <end position="120"/>
    </location>
</feature>
<feature type="binding site" evidence="1">
    <location>
        <position position="8"/>
    </location>
    <ligand>
        <name>Mg(2+)</name>
        <dbReference type="ChEBI" id="CHEBI:18420"/>
    </ligand>
</feature>
<feature type="binding site" evidence="1">
    <location>
        <position position="58"/>
    </location>
    <ligand>
        <name>Mg(2+)</name>
        <dbReference type="ChEBI" id="CHEBI:18420"/>
    </ligand>
</feature>
<organism>
    <name type="scientific">Streptococcus pneumoniae (strain JJA)</name>
    <dbReference type="NCBI Taxonomy" id="488222"/>
    <lineage>
        <taxon>Bacteria</taxon>
        <taxon>Bacillati</taxon>
        <taxon>Bacillota</taxon>
        <taxon>Bacilli</taxon>
        <taxon>Lactobacillales</taxon>
        <taxon>Streptococcaceae</taxon>
        <taxon>Streptococcus</taxon>
    </lineage>
</organism>